<sequence>MELDDILDAGRGDRLFLLGNEAAVRAAIESGVGVASTYPGTPSSEIGNVLSKIAKRAGIYFEFSINEKVALEVAAAAAASGVRSFTFMKHVGLNVASDSFMSVAYTGVRAGMVVLSADDPSMFSSQNEQDNRHYARLAWVPLLEPSNPQEILEYMNHAFELSEEYRIPVLLRTTTRVSHMRGVVEAGERRAEPVKGFFRKNPEQFVPVPATARVMRRELVEKMKKLKRVADTSELNRVLNEDSESDLGIIASGGAFNYVYDALQTLGLDVPVLKLGFTYPFPAGLVAEFLSGLEGVLVVEEVDSVMEKEVLAVATSEGLDVGVHGKLDGTLPEIYEYSEDIVRRAISGLTGIKSHEKGIEAPELPERPPALCPGCPHRAMYYSVRRAASELGIEGEDLIFPTDIGCYTLGIEPPYSAADYLLSMGSSVGTACGFSAATSQRIVSFIGDSTFFHAGIPPLINAVHNRQRFVLVILDNRTTAMTGGQPHPGLPVDGMGEEAPAISIEDITRACGVEFVETVNPMNIRRSSETIRRALQHESVAVVISRYPCMLSEGAVRGRPVRVDEEKCDLCLECLNELACPAIVEEDGRVFIDPLYCRGCTICLQICPAGAIKPEGKR</sequence>
<gene>
    <name type="primary">iorA</name>
    <name type="ordered locus">MTBMA_c04220</name>
</gene>
<dbReference type="EC" id="1.2.7.8"/>
<dbReference type="EMBL" id="CP001710">
    <property type="protein sequence ID" value="ADL58023.1"/>
    <property type="molecule type" value="Genomic_DNA"/>
</dbReference>
<dbReference type="RefSeq" id="WP_013295249.1">
    <property type="nucleotide sequence ID" value="NC_014408.1"/>
</dbReference>
<dbReference type="STRING" id="79929.MTBMA_c04220"/>
<dbReference type="PaxDb" id="79929-MTBMA_c04220"/>
<dbReference type="GeneID" id="77399201"/>
<dbReference type="GeneID" id="9704128"/>
<dbReference type="KEGG" id="mmg:MTBMA_c04220"/>
<dbReference type="PATRIC" id="fig|79929.8.peg.411"/>
<dbReference type="HOGENOM" id="CLU_017727_0_0_2"/>
<dbReference type="OrthoDB" id="19071at2157"/>
<dbReference type="Proteomes" id="UP000000345">
    <property type="component" value="Chromosome"/>
</dbReference>
<dbReference type="GO" id="GO:0051539">
    <property type="term" value="F:4 iron, 4 sulfur cluster binding"/>
    <property type="evidence" value="ECO:0007669"/>
    <property type="project" value="UniProtKB-KW"/>
</dbReference>
<dbReference type="GO" id="GO:0043805">
    <property type="term" value="F:indolepyruvate ferredoxin oxidoreductase activity"/>
    <property type="evidence" value="ECO:0007669"/>
    <property type="project" value="UniProtKB-EC"/>
</dbReference>
<dbReference type="GO" id="GO:0046872">
    <property type="term" value="F:metal ion binding"/>
    <property type="evidence" value="ECO:0007669"/>
    <property type="project" value="UniProtKB-KW"/>
</dbReference>
<dbReference type="GO" id="GO:0030976">
    <property type="term" value="F:thiamine pyrophosphate binding"/>
    <property type="evidence" value="ECO:0007669"/>
    <property type="project" value="InterPro"/>
</dbReference>
<dbReference type="GO" id="GO:0006082">
    <property type="term" value="P:organic acid metabolic process"/>
    <property type="evidence" value="ECO:0007669"/>
    <property type="project" value="UniProtKB-ARBA"/>
</dbReference>
<dbReference type="GO" id="GO:0044272">
    <property type="term" value="P:sulfur compound biosynthetic process"/>
    <property type="evidence" value="ECO:0007669"/>
    <property type="project" value="UniProtKB-ARBA"/>
</dbReference>
<dbReference type="CDD" id="cd02008">
    <property type="entry name" value="TPP_IOR_alpha"/>
    <property type="match status" value="1"/>
</dbReference>
<dbReference type="CDD" id="cd07034">
    <property type="entry name" value="TPP_PYR_PFOR_IOR-alpha_like"/>
    <property type="match status" value="1"/>
</dbReference>
<dbReference type="FunFam" id="3.40.50.970:FF:000039">
    <property type="entry name" value="Indolepyruvate oxidoreductase subunit IorA"/>
    <property type="match status" value="1"/>
</dbReference>
<dbReference type="Gene3D" id="3.30.70.20">
    <property type="match status" value="1"/>
</dbReference>
<dbReference type="Gene3D" id="3.40.50.920">
    <property type="match status" value="1"/>
</dbReference>
<dbReference type="Gene3D" id="3.40.50.970">
    <property type="match status" value="2"/>
</dbReference>
<dbReference type="InterPro" id="IPR017896">
    <property type="entry name" value="4Fe4S_Fe-S-bd"/>
</dbReference>
<dbReference type="InterPro" id="IPR017900">
    <property type="entry name" value="4Fe4S_Fe_S_CS"/>
</dbReference>
<dbReference type="InterPro" id="IPR045025">
    <property type="entry name" value="HACL1-like"/>
</dbReference>
<dbReference type="InterPro" id="IPR017721">
    <property type="entry name" value="IorA"/>
</dbReference>
<dbReference type="InterPro" id="IPR002880">
    <property type="entry name" value="Pyrv_Fd/Flavodoxin_OxRdtase_N"/>
</dbReference>
<dbReference type="InterPro" id="IPR029061">
    <property type="entry name" value="THDP-binding"/>
</dbReference>
<dbReference type="InterPro" id="IPR011766">
    <property type="entry name" value="TPP_enzyme_TPP-bd"/>
</dbReference>
<dbReference type="InterPro" id="IPR009014">
    <property type="entry name" value="Transketo_C/PFOR_II"/>
</dbReference>
<dbReference type="NCBIfam" id="TIGR03336">
    <property type="entry name" value="IOR_alpha"/>
    <property type="match status" value="1"/>
</dbReference>
<dbReference type="PANTHER" id="PTHR43710">
    <property type="entry name" value="2-HYDROXYACYL-COA LYASE"/>
    <property type="match status" value="1"/>
</dbReference>
<dbReference type="PANTHER" id="PTHR43710:SF7">
    <property type="entry name" value="INDOLEPYRUVATE OXIDOREDUCTASE SUBUNIT IORA"/>
    <property type="match status" value="1"/>
</dbReference>
<dbReference type="Pfam" id="PF01855">
    <property type="entry name" value="POR_N"/>
    <property type="match status" value="1"/>
</dbReference>
<dbReference type="Pfam" id="PF02775">
    <property type="entry name" value="TPP_enzyme_C"/>
    <property type="match status" value="1"/>
</dbReference>
<dbReference type="PIRSF" id="PIRSF006439">
    <property type="entry name" value="Indolepyruvate_ferr_oxidored"/>
    <property type="match status" value="1"/>
</dbReference>
<dbReference type="SUPFAM" id="SSF54862">
    <property type="entry name" value="4Fe-4S ferredoxins"/>
    <property type="match status" value="1"/>
</dbReference>
<dbReference type="SUPFAM" id="SSF52518">
    <property type="entry name" value="Thiamin diphosphate-binding fold (THDP-binding)"/>
    <property type="match status" value="2"/>
</dbReference>
<dbReference type="SUPFAM" id="SSF52922">
    <property type="entry name" value="TK C-terminal domain-like"/>
    <property type="match status" value="1"/>
</dbReference>
<dbReference type="PROSITE" id="PS00198">
    <property type="entry name" value="4FE4S_FER_1"/>
    <property type="match status" value="1"/>
</dbReference>
<dbReference type="PROSITE" id="PS51379">
    <property type="entry name" value="4FE4S_FER_2"/>
    <property type="match status" value="2"/>
</dbReference>
<evidence type="ECO:0000250" key="1">
    <source>
        <dbReference type="UniProtKB" id="O07835"/>
    </source>
</evidence>
<evidence type="ECO:0000255" key="2">
    <source>
        <dbReference type="PROSITE-ProRule" id="PRU00711"/>
    </source>
</evidence>
<evidence type="ECO:0000269" key="3">
    <source>
    </source>
</evidence>
<evidence type="ECO:0000305" key="4"/>
<name>IORA_METTM</name>
<protein>
    <recommendedName>
        <fullName>Indolepyruvate oxidoreductase subunit IorA</fullName>
        <shortName>IOR</shortName>
        <ecNumber>1.2.7.8</ecNumber>
    </recommendedName>
    <alternativeName>
        <fullName>Indolepyruvate ferredoxin oxidoreductase subunit alpha</fullName>
    </alternativeName>
</protein>
<comment type="function">
    <text>Catalyzes the ferredoxin-dependent oxidative decarboxylation of arylpyruvates.</text>
</comment>
<comment type="catalytic activity">
    <reaction>
        <text>indole-3-pyruvate + 2 oxidized [2Fe-2S]-[ferredoxin] + CoA = (indol-3-yl)acetyl-CoA + 2 reduced [2Fe-2S]-[ferredoxin] + CO2 + H(+)</text>
        <dbReference type="Rhea" id="RHEA:12645"/>
        <dbReference type="Rhea" id="RHEA-COMP:10000"/>
        <dbReference type="Rhea" id="RHEA-COMP:10001"/>
        <dbReference type="ChEBI" id="CHEBI:15378"/>
        <dbReference type="ChEBI" id="CHEBI:16526"/>
        <dbReference type="ChEBI" id="CHEBI:17640"/>
        <dbReference type="ChEBI" id="CHEBI:33737"/>
        <dbReference type="ChEBI" id="CHEBI:33738"/>
        <dbReference type="ChEBI" id="CHEBI:57271"/>
        <dbReference type="ChEBI" id="CHEBI:57287"/>
        <dbReference type="EC" id="1.2.7.8"/>
    </reaction>
</comment>
<comment type="cofactor">
    <cofactor evidence="1">
        <name>[4Fe-4S] cluster</name>
        <dbReference type="ChEBI" id="CHEBI:49883"/>
    </cofactor>
    <text evidence="1">Binds 2 [4Fe-4S] clusters. In this family the first cluster has a non-standard and varying [4Fe-4S] binding motif CX(2)CX(2)CX(4-5)CP.</text>
</comment>
<comment type="biophysicochemical properties">
    <phDependence>
        <text evidence="3">Optimum pH is 10.0.</text>
    </phDependence>
    <temperatureDependence>
        <text evidence="3">Optimum temperature is 80 degrees Celsius.</text>
    </temperatureDependence>
</comment>
<comment type="subunit">
    <text evidence="3">Heterodimer of the IorA and IorB subunits.</text>
</comment>
<proteinExistence type="evidence at protein level"/>
<accession>P80910</accession>
<accession>D9PUX6</accession>
<organism>
    <name type="scientific">Methanothermobacter marburgensis (strain ATCC BAA-927 / DSM 2133 / JCM 14651 / NBRC 100331 / OCM 82 / Marburg)</name>
    <name type="common">Methanobacterium thermoautotrophicum</name>
    <dbReference type="NCBI Taxonomy" id="79929"/>
    <lineage>
        <taxon>Archaea</taxon>
        <taxon>Methanobacteriati</taxon>
        <taxon>Methanobacteriota</taxon>
        <taxon>Methanomada group</taxon>
        <taxon>Methanobacteria</taxon>
        <taxon>Methanobacteriales</taxon>
        <taxon>Methanobacteriaceae</taxon>
        <taxon>Methanothermobacter</taxon>
    </lineage>
</organism>
<keyword id="KW-0004">4Fe-4S</keyword>
<keyword id="KW-0903">Direct protein sequencing</keyword>
<keyword id="KW-0249">Electron transport</keyword>
<keyword id="KW-0408">Iron</keyword>
<keyword id="KW-0411">Iron-sulfur</keyword>
<keyword id="KW-0479">Metal-binding</keyword>
<keyword id="KW-0560">Oxidoreductase</keyword>
<keyword id="KW-0677">Repeat</keyword>
<keyword id="KW-0813">Transport</keyword>
<feature type="chain" id="PRO_0000099927" description="Indolepyruvate oxidoreductase subunit IorA">
    <location>
        <begin position="1"/>
        <end position="618"/>
    </location>
</feature>
<feature type="domain" description="4Fe-4S ferredoxin-type 1" evidence="2">
    <location>
        <begin position="559"/>
        <end position="590"/>
    </location>
</feature>
<feature type="domain" description="4Fe-4S ferredoxin-type 2" evidence="2">
    <location>
        <begin position="588"/>
        <end position="617"/>
    </location>
</feature>
<feature type="binding site" evidence="1">
    <location>
        <position position="568"/>
    </location>
    <ligand>
        <name>[4Fe-4S] cluster</name>
        <dbReference type="ChEBI" id="CHEBI:49883"/>
        <label>1</label>
    </ligand>
</feature>
<feature type="binding site" evidence="1">
    <location>
        <position position="571"/>
    </location>
    <ligand>
        <name>[4Fe-4S] cluster</name>
        <dbReference type="ChEBI" id="CHEBI:49883"/>
        <label>1</label>
    </ligand>
</feature>
<feature type="binding site" evidence="1">
    <location>
        <position position="574"/>
    </location>
    <ligand>
        <name>[4Fe-4S] cluster</name>
        <dbReference type="ChEBI" id="CHEBI:49883"/>
        <label>1</label>
    </ligand>
</feature>
<feature type="binding site" evidence="1">
    <location>
        <position position="580"/>
    </location>
    <ligand>
        <name>[4Fe-4S] cluster</name>
        <dbReference type="ChEBI" id="CHEBI:49883"/>
        <label>2</label>
    </ligand>
</feature>
<feature type="binding site" evidence="1">
    <location>
        <position position="597"/>
    </location>
    <ligand>
        <name>[4Fe-4S] cluster</name>
        <dbReference type="ChEBI" id="CHEBI:49883"/>
        <label>2</label>
    </ligand>
</feature>
<feature type="binding site" evidence="1">
    <location>
        <position position="600"/>
    </location>
    <ligand>
        <name>[4Fe-4S] cluster</name>
        <dbReference type="ChEBI" id="CHEBI:49883"/>
        <label>2</label>
    </ligand>
</feature>
<feature type="binding site" evidence="1">
    <location>
        <position position="603"/>
    </location>
    <ligand>
        <name>[4Fe-4S] cluster</name>
        <dbReference type="ChEBI" id="CHEBI:49883"/>
        <label>2</label>
    </ligand>
</feature>
<feature type="binding site" evidence="1">
    <location>
        <position position="607"/>
    </location>
    <ligand>
        <name>[4Fe-4S] cluster</name>
        <dbReference type="ChEBI" id="CHEBI:49883"/>
        <label>1</label>
    </ligand>
</feature>
<feature type="sequence conflict" description="In Ref. 2; AA sequence." evidence="4" ref="2">
    <original>R</original>
    <variation>V</variation>
    <location>
        <position position="11"/>
    </location>
</feature>
<reference key="1">
    <citation type="journal article" date="2010" name="J. Bacteriol.">
        <title>Complete genome sequence of Methanothermobacter marburgensis, a methanoarchaeon model organism.</title>
        <authorList>
            <person name="Liesegang H."/>
            <person name="Kaster A.K."/>
            <person name="Wiezer A."/>
            <person name="Goenrich M."/>
            <person name="Wollherr A."/>
            <person name="Seedorf H."/>
            <person name="Gottschalk G."/>
            <person name="Thauer R.K."/>
        </authorList>
    </citation>
    <scope>NUCLEOTIDE SEQUENCE [LARGE SCALE GENOMIC DNA]</scope>
    <source>
        <strain>ATCC BAA-927 / DSM 2133 / JCM 14651 / NBRC 100331 / OCM 82 / Marburg</strain>
    </source>
</reference>
<reference key="2">
    <citation type="journal article" date="1997" name="Eur. J. Biochem.">
        <title>Structures and functions of four anabolic 2-oxoacid oxidoreductases in Methanobacterium thermoautotrophicum.</title>
        <authorList>
            <person name="Tersteegen A."/>
            <person name="Linder D."/>
            <person name="Thauer R.K."/>
            <person name="Hedderich R."/>
        </authorList>
    </citation>
    <scope>PROTEIN SEQUENCE OF 1-27</scope>
    <scope>BIOPHYSICOCHEMICAL PROPERTIES</scope>
    <scope>SUBUNIT</scope>
    <source>
        <strain>ATCC BAA-927 / DSM 2133 / JCM 14651 / NBRC 100331 / OCM 82 / Marburg</strain>
    </source>
</reference>